<feature type="chain" id="PRO_0000207306" description="Protein transport protein HofB homolog">
    <location>
        <begin position="1"/>
        <end position="464"/>
    </location>
</feature>
<feature type="binding site" evidence="1">
    <location>
        <begin position="264"/>
        <end position="271"/>
    </location>
    <ligand>
        <name>ATP</name>
        <dbReference type="ChEBI" id="CHEBI:30616"/>
    </ligand>
</feature>
<gene>
    <name type="primary">hofB</name>
    <name type="synonym">hopB</name>
    <name type="ordered locus">HI_0298</name>
</gene>
<evidence type="ECO:0000255" key="1"/>
<evidence type="ECO:0000305" key="2"/>
<protein>
    <recommendedName>
        <fullName>Protein transport protein HofB homolog</fullName>
    </recommendedName>
</protein>
<organism>
    <name type="scientific">Haemophilus influenzae (strain ATCC 51907 / DSM 11121 / KW20 / Rd)</name>
    <dbReference type="NCBI Taxonomy" id="71421"/>
    <lineage>
        <taxon>Bacteria</taxon>
        <taxon>Pseudomonadati</taxon>
        <taxon>Pseudomonadota</taxon>
        <taxon>Gammaproteobacteria</taxon>
        <taxon>Pasteurellales</taxon>
        <taxon>Pasteurellaceae</taxon>
        <taxon>Haemophilus</taxon>
    </lineage>
</organism>
<reference key="1">
    <citation type="journal article" date="1995" name="Science">
        <title>Whole-genome random sequencing and assembly of Haemophilus influenzae Rd.</title>
        <authorList>
            <person name="Fleischmann R.D."/>
            <person name="Adams M.D."/>
            <person name="White O."/>
            <person name="Clayton R.A."/>
            <person name="Kirkness E.F."/>
            <person name="Kerlavage A.R."/>
            <person name="Bult C.J."/>
            <person name="Tomb J.-F."/>
            <person name="Dougherty B.A."/>
            <person name="Merrick J.M."/>
            <person name="McKenney K."/>
            <person name="Sutton G.G."/>
            <person name="FitzHugh W."/>
            <person name="Fields C.A."/>
            <person name="Gocayne J.D."/>
            <person name="Scott J.D."/>
            <person name="Shirley R."/>
            <person name="Liu L.-I."/>
            <person name="Glodek A."/>
            <person name="Kelley J.M."/>
            <person name="Weidman J.F."/>
            <person name="Phillips C.A."/>
            <person name="Spriggs T."/>
            <person name="Hedblom E."/>
            <person name="Cotton M.D."/>
            <person name="Utterback T.R."/>
            <person name="Hanna M.C."/>
            <person name="Nguyen D.T."/>
            <person name="Saudek D.M."/>
            <person name="Brandon R.C."/>
            <person name="Fine L.D."/>
            <person name="Fritchman J.L."/>
            <person name="Fuhrmann J.L."/>
            <person name="Geoghagen N.S.M."/>
            <person name="Gnehm C.L."/>
            <person name="McDonald L.A."/>
            <person name="Small K.V."/>
            <person name="Fraser C.M."/>
            <person name="Smith H.O."/>
            <person name="Venter J.C."/>
        </authorList>
    </citation>
    <scope>NUCLEOTIDE SEQUENCE [LARGE SCALE GENOMIC DNA]</scope>
    <source>
        <strain>ATCC 51907 / DSM 11121 / KW20 / Rd</strain>
    </source>
</reference>
<accession>P44622</accession>
<proteinExistence type="inferred from homology"/>
<name>HOFB_HAEIN</name>
<comment type="similarity">
    <text evidence="2">Belongs to the GSP E family.</text>
</comment>
<sequence>MTSYALLHTQRVTAKNGEVFTISPDLWERNQQQQSLLLRYFALPLKEENNRLWLGVDSLSNLSACETIAFITGKPVEPILLESSQLKELLQQLTPNQMQVEEQVKFYQHQETHFEQEDDEPVIRLLNQIFESALQKNASDIHLETLADQFQVRFRIDGVLQPQPLISKIFANRIISRLKLLAKLDISENRLPQDGRFQFKTTFSDILDFRLSTLPTHWGEKIVLRAQQNKPVELSFSELGMTENQQQAFQRVLSQPQGLILVTGPTGSGKSISLYTALQWLNTPDKHIMTAEDPIEIELDGIIQSQINPQIGLDFNRLLRTFLRQDPDIIMLGEIRDEESAMIALRAAQTGHLVLSTLHTNDAISAISRLQQLGIQQYEIKNSLLLVIAQRLVRKLCSKCGGNLANSCDCHQGYRGRIGVYQFLHWQQNDYQTDFKNLRASGLEKVSQGITDEKEIERVLGKNL</sequence>
<dbReference type="EMBL" id="L42023">
    <property type="protein sequence ID" value="AAC21962.1"/>
    <property type="molecule type" value="Genomic_DNA"/>
</dbReference>
<dbReference type="PIR" id="E64060">
    <property type="entry name" value="E64060"/>
</dbReference>
<dbReference type="RefSeq" id="NP_438465.1">
    <property type="nucleotide sequence ID" value="NC_000907.1"/>
</dbReference>
<dbReference type="SMR" id="P44622"/>
<dbReference type="STRING" id="71421.HI_0298"/>
<dbReference type="EnsemblBacteria" id="AAC21962">
    <property type="protein sequence ID" value="AAC21962"/>
    <property type="gene ID" value="HI_0298"/>
</dbReference>
<dbReference type="KEGG" id="hin:HI_0298"/>
<dbReference type="PATRIC" id="fig|71421.8.peg.314"/>
<dbReference type="eggNOG" id="COG2804">
    <property type="taxonomic scope" value="Bacteria"/>
</dbReference>
<dbReference type="HOGENOM" id="CLU_013446_10_1_6"/>
<dbReference type="OrthoDB" id="9804785at2"/>
<dbReference type="PhylomeDB" id="P44622"/>
<dbReference type="BioCyc" id="HINF71421:G1GJ1-316-MONOMER"/>
<dbReference type="Proteomes" id="UP000000579">
    <property type="component" value="Chromosome"/>
</dbReference>
<dbReference type="GO" id="GO:0005886">
    <property type="term" value="C:plasma membrane"/>
    <property type="evidence" value="ECO:0000318"/>
    <property type="project" value="GO_Central"/>
</dbReference>
<dbReference type="GO" id="GO:0005524">
    <property type="term" value="F:ATP binding"/>
    <property type="evidence" value="ECO:0007669"/>
    <property type="project" value="UniProtKB-KW"/>
</dbReference>
<dbReference type="GO" id="GO:0016887">
    <property type="term" value="F:ATP hydrolysis activity"/>
    <property type="evidence" value="ECO:0000318"/>
    <property type="project" value="GO_Central"/>
</dbReference>
<dbReference type="CDD" id="cd01129">
    <property type="entry name" value="PulE-GspE-like"/>
    <property type="match status" value="1"/>
</dbReference>
<dbReference type="Gene3D" id="3.30.450.90">
    <property type="match status" value="1"/>
</dbReference>
<dbReference type="Gene3D" id="3.40.50.300">
    <property type="entry name" value="P-loop containing nucleotide triphosphate hydrolases"/>
    <property type="match status" value="1"/>
</dbReference>
<dbReference type="Gene3D" id="3.30.300.160">
    <property type="entry name" value="Type II secretion system, protein E, N-terminal domain"/>
    <property type="match status" value="1"/>
</dbReference>
<dbReference type="InterPro" id="IPR003593">
    <property type="entry name" value="AAA+_ATPase"/>
</dbReference>
<dbReference type="InterPro" id="IPR027417">
    <property type="entry name" value="P-loop_NTPase"/>
</dbReference>
<dbReference type="InterPro" id="IPR001482">
    <property type="entry name" value="T2SS/T4SS_dom"/>
</dbReference>
<dbReference type="InterPro" id="IPR037257">
    <property type="entry name" value="T2SS_E_N_sf"/>
</dbReference>
<dbReference type="InterPro" id="IPR007831">
    <property type="entry name" value="T2SS_GspE_N"/>
</dbReference>
<dbReference type="PANTHER" id="PTHR30258:SF1">
    <property type="entry name" value="PROTEIN TRANSPORT PROTEIN HOFB HOMOLOG"/>
    <property type="match status" value="1"/>
</dbReference>
<dbReference type="PANTHER" id="PTHR30258">
    <property type="entry name" value="TYPE II SECRETION SYSTEM PROTEIN GSPE-RELATED"/>
    <property type="match status" value="1"/>
</dbReference>
<dbReference type="Pfam" id="PF05157">
    <property type="entry name" value="MshEN"/>
    <property type="match status" value="1"/>
</dbReference>
<dbReference type="Pfam" id="PF00437">
    <property type="entry name" value="T2SSE"/>
    <property type="match status" value="1"/>
</dbReference>
<dbReference type="SMART" id="SM00382">
    <property type="entry name" value="AAA"/>
    <property type="match status" value="1"/>
</dbReference>
<dbReference type="SUPFAM" id="SSF160246">
    <property type="entry name" value="EspE N-terminal domain-like"/>
    <property type="match status" value="1"/>
</dbReference>
<dbReference type="SUPFAM" id="SSF52540">
    <property type="entry name" value="P-loop containing nucleoside triphosphate hydrolases"/>
    <property type="match status" value="1"/>
</dbReference>
<dbReference type="PROSITE" id="PS00662">
    <property type="entry name" value="T2SP_E"/>
    <property type="match status" value="1"/>
</dbReference>
<keyword id="KW-0067">ATP-binding</keyword>
<keyword id="KW-0547">Nucleotide-binding</keyword>
<keyword id="KW-1185">Reference proteome</keyword>
<keyword id="KW-0813">Transport</keyword>